<comment type="function">
    <text evidence="1">Negatively regulates transcription of bacterial ribonucleotide reductase nrd genes and operons by binding to NrdR-boxes.</text>
</comment>
<comment type="cofactor">
    <cofactor evidence="1">
        <name>Zn(2+)</name>
        <dbReference type="ChEBI" id="CHEBI:29105"/>
    </cofactor>
    <text evidence="1">Binds 1 zinc ion.</text>
</comment>
<comment type="similarity">
    <text evidence="1">Belongs to the NrdR family.</text>
</comment>
<dbReference type="EMBL" id="CP000384">
    <property type="protein sequence ID" value="ABG08278.1"/>
    <property type="molecule type" value="Genomic_DNA"/>
</dbReference>
<dbReference type="SMR" id="Q1BA06"/>
<dbReference type="KEGG" id="mmc:Mmcs_2170"/>
<dbReference type="HOGENOM" id="CLU_108412_1_0_11"/>
<dbReference type="BioCyc" id="MSP164756:G1G6O-2217-MONOMER"/>
<dbReference type="GO" id="GO:0005524">
    <property type="term" value="F:ATP binding"/>
    <property type="evidence" value="ECO:0007669"/>
    <property type="project" value="UniProtKB-KW"/>
</dbReference>
<dbReference type="GO" id="GO:0003677">
    <property type="term" value="F:DNA binding"/>
    <property type="evidence" value="ECO:0007669"/>
    <property type="project" value="UniProtKB-KW"/>
</dbReference>
<dbReference type="GO" id="GO:0008270">
    <property type="term" value="F:zinc ion binding"/>
    <property type="evidence" value="ECO:0007669"/>
    <property type="project" value="UniProtKB-UniRule"/>
</dbReference>
<dbReference type="GO" id="GO:0045892">
    <property type="term" value="P:negative regulation of DNA-templated transcription"/>
    <property type="evidence" value="ECO:0007669"/>
    <property type="project" value="UniProtKB-UniRule"/>
</dbReference>
<dbReference type="HAMAP" id="MF_00440">
    <property type="entry name" value="NrdR"/>
    <property type="match status" value="1"/>
</dbReference>
<dbReference type="InterPro" id="IPR005144">
    <property type="entry name" value="ATP-cone_dom"/>
</dbReference>
<dbReference type="InterPro" id="IPR055173">
    <property type="entry name" value="NrdR-like_N"/>
</dbReference>
<dbReference type="InterPro" id="IPR003796">
    <property type="entry name" value="RNR_NrdR-like"/>
</dbReference>
<dbReference type="NCBIfam" id="TIGR00244">
    <property type="entry name" value="transcriptional regulator NrdR"/>
    <property type="match status" value="1"/>
</dbReference>
<dbReference type="PANTHER" id="PTHR30455">
    <property type="entry name" value="TRANSCRIPTIONAL REPRESSOR NRDR"/>
    <property type="match status" value="1"/>
</dbReference>
<dbReference type="PANTHER" id="PTHR30455:SF2">
    <property type="entry name" value="TRANSCRIPTIONAL REPRESSOR NRDR"/>
    <property type="match status" value="1"/>
</dbReference>
<dbReference type="Pfam" id="PF03477">
    <property type="entry name" value="ATP-cone"/>
    <property type="match status" value="1"/>
</dbReference>
<dbReference type="Pfam" id="PF22811">
    <property type="entry name" value="Zn_ribbon_NrdR"/>
    <property type="match status" value="1"/>
</dbReference>
<dbReference type="PROSITE" id="PS51161">
    <property type="entry name" value="ATP_CONE"/>
    <property type="match status" value="1"/>
</dbReference>
<feature type="chain" id="PRO_0000264188" description="Transcriptional repressor NrdR">
    <location>
        <begin position="1"/>
        <end position="154"/>
    </location>
</feature>
<feature type="domain" description="ATP-cone" evidence="1">
    <location>
        <begin position="46"/>
        <end position="136"/>
    </location>
</feature>
<feature type="zinc finger region" evidence="1">
    <location>
        <begin position="3"/>
        <end position="34"/>
    </location>
</feature>
<sequence length="154" mass="17238">MHCPFCRHPDSRVVDSRETDEGQAIRRRRSCPECGRRFTTVETAVLAVVKRSGVTEPFSREKVIKGVRRACQGRQVDDDALNLLAQQVEDAVRATGSPEVPSHEVGLAILGPLRDLDEVAYLRFASVYRSFESAADFEREIEALRAHQDVTRSG</sequence>
<evidence type="ECO:0000255" key="1">
    <source>
        <dbReference type="HAMAP-Rule" id="MF_00440"/>
    </source>
</evidence>
<gene>
    <name evidence="1" type="primary">nrdR</name>
    <name type="ordered locus">Mmcs_2170</name>
</gene>
<name>NRDR_MYCSS</name>
<accession>Q1BA06</accession>
<proteinExistence type="inferred from homology"/>
<protein>
    <recommendedName>
        <fullName evidence="1">Transcriptional repressor NrdR</fullName>
    </recommendedName>
</protein>
<reference key="1">
    <citation type="submission" date="2006-06" db="EMBL/GenBank/DDBJ databases">
        <title>Complete sequence of chromosome of Mycobacterium sp. MCS.</title>
        <authorList>
            <consortium name="US DOE Joint Genome Institute"/>
            <person name="Copeland A."/>
            <person name="Lucas S."/>
            <person name="Lapidus A."/>
            <person name="Barry K."/>
            <person name="Detter J.C."/>
            <person name="Glavina del Rio T."/>
            <person name="Hammon N."/>
            <person name="Israni S."/>
            <person name="Dalin E."/>
            <person name="Tice H."/>
            <person name="Pitluck S."/>
            <person name="Martinez M."/>
            <person name="Schmutz J."/>
            <person name="Larimer F."/>
            <person name="Land M."/>
            <person name="Hauser L."/>
            <person name="Kyrpides N."/>
            <person name="Kim E."/>
            <person name="Miller C.D."/>
            <person name="Hughes J.E."/>
            <person name="Anderson A.J."/>
            <person name="Sims R.C."/>
            <person name="Richardson P."/>
        </authorList>
    </citation>
    <scope>NUCLEOTIDE SEQUENCE [LARGE SCALE GENOMIC DNA]</scope>
    <source>
        <strain>MCS</strain>
    </source>
</reference>
<keyword id="KW-0067">ATP-binding</keyword>
<keyword id="KW-0238">DNA-binding</keyword>
<keyword id="KW-0479">Metal-binding</keyword>
<keyword id="KW-0547">Nucleotide-binding</keyword>
<keyword id="KW-0678">Repressor</keyword>
<keyword id="KW-0804">Transcription</keyword>
<keyword id="KW-0805">Transcription regulation</keyword>
<keyword id="KW-0862">Zinc</keyword>
<keyword id="KW-0863">Zinc-finger</keyword>
<organism>
    <name type="scientific">Mycobacterium sp. (strain MCS)</name>
    <dbReference type="NCBI Taxonomy" id="164756"/>
    <lineage>
        <taxon>Bacteria</taxon>
        <taxon>Bacillati</taxon>
        <taxon>Actinomycetota</taxon>
        <taxon>Actinomycetes</taxon>
        <taxon>Mycobacteriales</taxon>
        <taxon>Mycobacteriaceae</taxon>
        <taxon>Mycobacterium</taxon>
    </lineage>
</organism>